<gene>
    <name type="ORF">UL48</name>
</gene>
<organismHost>
    <name type="scientific">Homo sapiens</name>
    <name type="common">Human</name>
    <dbReference type="NCBI Taxonomy" id="9606"/>
</organismHost>
<evidence type="ECO:0000255" key="1">
    <source>
        <dbReference type="HAMAP-Rule" id="MF_04044"/>
    </source>
</evidence>
<evidence type="ECO:0000256" key="2">
    <source>
        <dbReference type="SAM" id="MobiDB-lite"/>
    </source>
</evidence>
<evidence type="ECO:0000269" key="3">
    <source>
    </source>
</evidence>
<dbReference type="EC" id="3.4.19.12" evidence="1 3"/>
<dbReference type="EC" id="3.4.22.-" evidence="1 3"/>
<dbReference type="EMBL" id="GU980198">
    <property type="protein sequence ID" value="ADE88055.1"/>
    <property type="molecule type" value="Genomic_DNA"/>
</dbReference>
<dbReference type="SMR" id="D5LX59"/>
<dbReference type="Proteomes" id="UP000149703">
    <property type="component" value="Segment"/>
</dbReference>
<dbReference type="GO" id="GO:0030430">
    <property type="term" value="C:host cell cytoplasm"/>
    <property type="evidence" value="ECO:0007669"/>
    <property type="project" value="UniProtKB-SubCell"/>
</dbReference>
<dbReference type="GO" id="GO:0042025">
    <property type="term" value="C:host cell nucleus"/>
    <property type="evidence" value="ECO:0007669"/>
    <property type="project" value="UniProtKB-SubCell"/>
</dbReference>
<dbReference type="GO" id="GO:0019033">
    <property type="term" value="C:viral tegument"/>
    <property type="evidence" value="ECO:0007669"/>
    <property type="project" value="UniProtKB-SubCell"/>
</dbReference>
<dbReference type="GO" id="GO:0004843">
    <property type="term" value="F:cysteine-type deubiquitinase activity"/>
    <property type="evidence" value="ECO:0007669"/>
    <property type="project" value="UniProtKB-EC"/>
</dbReference>
<dbReference type="GO" id="GO:0006508">
    <property type="term" value="P:proteolysis"/>
    <property type="evidence" value="ECO:0007669"/>
    <property type="project" value="UniProtKB-KW"/>
</dbReference>
<dbReference type="GO" id="GO:0039648">
    <property type="term" value="P:symbiont-mediated perturbation of host ubiquitin-like protein modification"/>
    <property type="evidence" value="ECO:0007669"/>
    <property type="project" value="UniProtKB-KW"/>
</dbReference>
<dbReference type="Gene3D" id="3.90.70.120">
    <property type="match status" value="1"/>
</dbReference>
<dbReference type="HAMAP" id="MF_04044">
    <property type="entry name" value="HSV_LTP"/>
    <property type="match status" value="1"/>
</dbReference>
<dbReference type="InterPro" id="IPR006928">
    <property type="entry name" value="Herpes_teg_USP"/>
</dbReference>
<dbReference type="InterPro" id="IPR034702">
    <property type="entry name" value="HSV_LTP"/>
</dbReference>
<dbReference type="InterPro" id="IPR038765">
    <property type="entry name" value="Papain-like_cys_pep_sf"/>
</dbReference>
<dbReference type="Pfam" id="PF04843">
    <property type="entry name" value="Herpes_teg_N"/>
    <property type="match status" value="1"/>
</dbReference>
<dbReference type="SUPFAM" id="SSF54001">
    <property type="entry name" value="Cysteine proteinases"/>
    <property type="match status" value="1"/>
</dbReference>
<dbReference type="PROSITE" id="PS51521">
    <property type="entry name" value="HTUSP"/>
    <property type="match status" value="1"/>
</dbReference>
<proteinExistence type="evidence at protein level"/>
<organism>
    <name type="scientific">Human cytomegalovirus (strain Towne)</name>
    <name type="common">HHV-5</name>
    <name type="synonym">Human herpesvirus 5</name>
    <dbReference type="NCBI Taxonomy" id="10363"/>
    <lineage>
        <taxon>Viruses</taxon>
        <taxon>Duplodnaviria</taxon>
        <taxon>Heunggongvirae</taxon>
        <taxon>Peploviricota</taxon>
        <taxon>Herviviricetes</taxon>
        <taxon>Herpesvirales</taxon>
        <taxon>Orthoherpesviridae</taxon>
        <taxon>Betaherpesvirinae</taxon>
        <taxon>Cytomegalovirus</taxon>
        <taxon>Cytomegalovirus humanbeta5</taxon>
        <taxon>Human cytomegalovirus</taxon>
    </lineage>
</organism>
<comment type="function">
    <text evidence="1 3">Large tegument protein that plays multiple roles in the viral cycle. During viral entry, remains associated with the capsid while most of the tegument is detached and participates in the capsid transport toward the host nucleus. Plays a role in the routing of the capsid at the nuclear pore complex and subsequent uncoating. Within the host nucleus, acts as a deneddylase and promotes the degradation of nuclear CRLs (cullin-RING ubiquitin ligases) and thereby stabilizes nuclear CRL substrates, while cytoplasmic CRLs remain unaffected. These modifications prevent host cell cycle S-phase progression and create a favorable environment allowing efficient viral genome replication. Participates later in the secondary envelopment of capsids. Indeed, plays a linker role for the association of the outer viral tegument to the capsids together with the inner tegument protein.</text>
</comment>
<comment type="catalytic activity">
    <reaction evidence="1 3">
        <text>Thiol-dependent hydrolysis of ester, thioester, amide, peptide and isopeptide bonds formed by the C-terminal Gly of ubiquitin (a 76-residue protein attached to proteins as an intracellular targeting signal).</text>
        <dbReference type="EC" id="3.4.19.12"/>
    </reaction>
</comment>
<comment type="subunit">
    <text evidence="1">Interacts with host CUL1 and CUL4A; these interactions inhibit the E3 ligase activity of cullins. Interacts with inner tegument protein. Interacts with capsid vertex specific component CVC2. Interacts with the major capsid protein/MCP.</text>
</comment>
<comment type="subcellular location">
    <subcellularLocation>
        <location evidence="1">Virion tegument</location>
    </subcellularLocation>
    <subcellularLocation>
        <location evidence="1">Host cytoplasm</location>
    </subcellularLocation>
    <subcellularLocation>
        <location evidence="1">Host nucleus</location>
    </subcellularLocation>
    <text evidence="1">Tightly associated with the capsid.</text>
</comment>
<comment type="similarity">
    <text evidence="1">Belongs to the herpesviridae large tegument protein family.</text>
</comment>
<keyword id="KW-1035">Host cytoplasm</keyword>
<keyword id="KW-1048">Host nucleus</keyword>
<keyword id="KW-0945">Host-virus interaction</keyword>
<keyword id="KW-0378">Hydrolase</keyword>
<keyword id="KW-1127">Modulation of host ubiquitin pathway by viral deubiquitinase</keyword>
<keyword id="KW-1130">Modulation of host ubiquitin pathway by virus</keyword>
<keyword id="KW-0645">Protease</keyword>
<keyword id="KW-0677">Repeat</keyword>
<keyword id="KW-0788">Thiol protease</keyword>
<keyword id="KW-0833">Ubl conjugation pathway</keyword>
<keyword id="KW-0946">Virion</keyword>
<keyword id="KW-0920">Virion tegument</keyword>
<sequence>MKVTQASCHQGDIARFGARAGNQCVCNGIMFLHALHLGGTSAVLQTEALDAIMEEGARLDARLERELQKKLPAGGRLPVYRLGDEVPRRLESRFGRTVHALSRPFNGTTETCDLDGYMCPGIFDFLRYAHAKPRPTYVLVTVNSLARAVVFTEDHMLVFDPHSSAECHNAAVYHCEGLHQVLMVLTGFGVQLSPAFYYEALFLYMLDVATVPEAEIAARLVSTYRDRDIDLTGVVRESADTAATTTTAAPSLPPLPDPIVDPGCPPGVAPSIPVYDPSSSPKKTPEKRRKDLSGSKHGGKKKPPSTTSKTLATASSSSPSAIAAASSSSAVPPSYSCGEGALPALGRYQQLVDEVEQELKALTLPPLPANTSAWTLHAAGTESGANAATATAPSFDEAFLTDRLQQLIIHAVNQRSCLRRPCGPQSAAQQAVRAYLGLSKKLDAFLLNWLHHGLDLRRMHDYLSHKTTKGTYSTLDRALLEKMQVVFDPYGRQHGPALIAWVEEMLRYVESKPTNELSQRLQRFVTKRPMPVSDSFVCLRPVDFQRLTQVIEQRRRVLQRQREEYHGVYEHLAGLITSIDIHDLDASDLNRREILKALQPLDDNAKQELFRLGNAKMLELQMDLDRLSTQLLTRVHNHILNGFLPVEDLKQMERVVEQVLRLFYDLRDLKLCDGSYEEGFVVIREQLSYLMTGTVRDNVPLLQEILQLRHAYQQATQQNEGRLTQIHDLLHVIETLVRDPGSRGSALTLALVQEQLAQLEALGGLQLPEVQQRLQNAQLALSRLYEEEEETQRFLDGLSYDDPPTEQTIKRHPQLREMLRRDEQTRLRLINAVLSMFHTLVMRLARDESPRPTFFDAVSLLLQQLPPDSHEREDLRAANATYAQMVKKLEQIEKAGTGASEKRFQALRELVYFFRNHEYFFQHMVGRLGVGPQVTELYERYQHEMEEQHLERLEREWQEEAGKLTVTSVEDVQRVLARAPSHRVMHQMQQTLTTKMQDFLDKEKRKQEEQQRQLLDGYQKKVQQDLQRVVDAVKGEMLSTIPHQPLEATLELLLGLDQRAQPLLDKFNQDLLSALQQLSKKLDGRINECLHGVLTGDVERRCHPHREAAMQTQASLNHLDQVLGPQLLIHETQQALQHAVHQAQFIEKCQQGDPTTAITGSEFESDFARYRSSQQKMEGQLQETRQQMTETSERLDRSLRQDPGSSSVTRVPEKPFKGQELAGRITPPPVDFQRPVFKTLLDQQADAARKALSDEADLLNQKVQTQLRQRDEQLSTAQNLWTDLVTRHKMSGGLDVTTPDAKALMEKPLETLRELLGKATQQLPYLSAERTVRWMLAFLEEALAQITADPTHPHHGSRTHYRNLQQQAVESAVTLAHQIEQNAACENFIAQHQEATANGASTPRVDMVQAVEAVWQRLEPGRVAGGAARHQKVQELLQRLGQTLGDLELQETLATEYFALLHGIQTFSYGLDFRSQLEKIRDLRTRFAELAKRRGTRLSNEGALPNPRKPQATTSLGAFTRGLNALERHVQLGHQYLLNKLNGSSLVYRLEDIPSVLPPTHETDPALIMRDRLRRLCFARHHDTFLEVVDVFGMRQIVTQAGEPIHLVTDYGNVAFKYLALRDDGRPLAWRRRCSGGGLKNVVTTRYKAITVAVAVCQTLRTFWPQISQYDLRPYLTQHQSHTHPAETHTLHNLKLFCYLVSTAWHQRIDTQQELTAADRVGSGEGGDVGEQRPGRGTVLRLSLQEFCVLIAALYPEYIYTVLKYPVQMSLPSLTAHLHQDVIHAVVNNTHKMPPDHLPEQVKAFCITPTQWPAMQLNKLFWENKLVQQLCQVGPQKSTPPLGKLWLYAMATLVFPQDMLQCLWLELKPQYAETYASVSELVQTLFQIFTQQCEMVTEGYTQPQLPTGEPVLQMIRVRRQDTTTTDTNTTTEPGLLDVFIQTETALDYALGSWLFGIPVCLGVHVADLLKGQRVLVARHLEYTSRDRDFLRIQRSRDLNLSQLLQDTWTETPLEHCWLQAQIRRLRDYLRFPTRLEFIPLVIYNAQDHTVVRVLRPPSTFEQDHSRLVLDEAFPIFPLYDQDDNSSADNVAASGAAPTPPVPFNRVPVNIQFLRENPPPIARVQQPPRRHRHRAAAAADDDGQIDHVQDDTSRTADSALVSTAFGGSVFQENRLGETPLCRDELVAVAPGAASTSFASPPITVLTQNVLSALEILRLVRLNLRQLAQSVQDTIQHMRFLYLL</sequence>
<feature type="chain" id="PRO_0000406913" description="Large tegument protein deneddylase">
    <location>
        <begin position="1"/>
        <end position="2242"/>
    </location>
</feature>
<feature type="domain" description="Peptidase C76" evidence="1">
    <location>
        <begin position="4"/>
        <end position="226"/>
    </location>
</feature>
<feature type="region of interest" description="Deubiquitination activity" evidence="1">
    <location>
        <begin position="1"/>
        <end position="238"/>
    </location>
</feature>
<feature type="region of interest" description="Disordered" evidence="2">
    <location>
        <begin position="239"/>
        <end position="318"/>
    </location>
</feature>
<feature type="region of interest" description="Interaction with inner tegument protein" evidence="1">
    <location>
        <begin position="328"/>
        <end position="332"/>
    </location>
</feature>
<feature type="region of interest" description="Disordered" evidence="2">
    <location>
        <begin position="1173"/>
        <end position="1229"/>
    </location>
</feature>
<feature type="compositionally biased region" description="Low complexity" evidence="2">
    <location>
        <begin position="240"/>
        <end position="250"/>
    </location>
</feature>
<feature type="compositionally biased region" description="Pro residues" evidence="2">
    <location>
        <begin position="251"/>
        <end position="268"/>
    </location>
</feature>
<feature type="compositionally biased region" description="Low complexity" evidence="2">
    <location>
        <begin position="304"/>
        <end position="318"/>
    </location>
</feature>
<feature type="compositionally biased region" description="Polar residues" evidence="2">
    <location>
        <begin position="1173"/>
        <end position="1190"/>
    </location>
</feature>
<feature type="compositionally biased region" description="Basic and acidic residues" evidence="2">
    <location>
        <begin position="1191"/>
        <end position="1200"/>
    </location>
</feature>
<feature type="active site" evidence="1 3">
    <location>
        <position position="24"/>
    </location>
</feature>
<feature type="active site" evidence="1">
    <location>
        <position position="160"/>
    </location>
</feature>
<feature type="active site" evidence="1 3">
    <location>
        <position position="162"/>
    </location>
</feature>
<feature type="mutagenesis site" description="Complete loss of DUB activity." evidence="3">
    <original>C</original>
    <variation>S</variation>
    <location>
        <position position="24"/>
    </location>
</feature>
<feature type="mutagenesis site" description="Complete loss of DUB activity." evidence="3">
    <original>H</original>
    <variation>A</variation>
    <location>
        <position position="162"/>
    </location>
</feature>
<name>LTP_HCMVT</name>
<reference key="1">
    <citation type="submission" date="2010-03" db="EMBL/GenBank/DDBJ databases">
        <title>Human cytomegalovirus RL11 gene family: variation, recombination and transcription.</title>
        <authorList>
            <person name="Davison A.J."/>
        </authorList>
    </citation>
    <scope>NUCLEOTIDE SEQUENCE [LARGE SCALE GENOMIC DNA]</scope>
    <source>
        <strain>CINCY+Towne</strain>
    </source>
</reference>
<reference key="2">
    <citation type="journal article" date="2009" name="J. Virol.">
        <title>Cleavage specificity of the UL48 deubiquitinating protease activity of human cytomegalovirus and the growth of an active-site mutant virus in cultured cells.</title>
        <authorList>
            <person name="Kim E.T."/>
            <person name="Oh S.E."/>
            <person name="Lee Y.O."/>
            <person name="Gibson W."/>
            <person name="Ahn J.H."/>
        </authorList>
    </citation>
    <scope>FUNCTION</scope>
    <scope>MUTAGENESIS OF CYS-24 AND HIS-162</scope>
</reference>
<accession>D5LX59</accession>
<protein>
    <recommendedName>
        <fullName evidence="1">Large tegument protein deneddylase</fullName>
        <ecNumber evidence="1 3">3.4.19.12</ecNumber>
        <ecNumber evidence="1 3">3.4.22.-</ecNumber>
    </recommendedName>
</protein>